<comment type="function">
    <text evidence="1">Required for growth and/or survival at acidic conditions.</text>
</comment>
<comment type="subcellular location">
    <subcellularLocation>
        <location evidence="1">Periplasm</location>
    </subcellularLocation>
</comment>
<comment type="PTM">
    <text evidence="1">Proteolytic processing gives rise to the active protein.</text>
</comment>
<comment type="similarity">
    <text evidence="1">Belongs to the Asr family.</text>
</comment>
<feature type="signal peptide" evidence="1">
    <location>
        <begin position="1"/>
        <end position="21"/>
    </location>
</feature>
<feature type="propeptide" id="PRO_0000316043" evidence="1">
    <location>
        <begin position="22"/>
        <end position="58"/>
    </location>
</feature>
<feature type="chain" id="PRO_1000017750" description="Acid shock protein">
    <location>
        <begin position="59"/>
        <end position="102"/>
    </location>
</feature>
<feature type="region of interest" description="Disordered" evidence="2">
    <location>
        <begin position="22"/>
        <end position="102"/>
    </location>
</feature>
<feature type="compositionally biased region" description="Low complexity" evidence="2">
    <location>
        <begin position="22"/>
        <end position="41"/>
    </location>
</feature>
<feature type="compositionally biased region" description="Basic residues" evidence="2">
    <location>
        <begin position="80"/>
        <end position="90"/>
    </location>
</feature>
<feature type="compositionally biased region" description="Low complexity" evidence="2">
    <location>
        <begin position="91"/>
        <end position="102"/>
    </location>
</feature>
<accession>Q0THN1</accession>
<protein>
    <recommendedName>
        <fullName evidence="1">Acid shock protein</fullName>
    </recommendedName>
</protein>
<keyword id="KW-0574">Periplasm</keyword>
<keyword id="KW-0732">Signal</keyword>
<gene>
    <name evidence="1" type="primary">asr</name>
    <name type="ordered locus">ECP_1541</name>
</gene>
<evidence type="ECO:0000255" key="1">
    <source>
        <dbReference type="HAMAP-Rule" id="MF_00546"/>
    </source>
</evidence>
<evidence type="ECO:0000256" key="2">
    <source>
        <dbReference type="SAM" id="MobiDB-lite"/>
    </source>
</evidence>
<dbReference type="EMBL" id="CP000247">
    <property type="protein sequence ID" value="ABG69548.1"/>
    <property type="molecule type" value="Genomic_DNA"/>
</dbReference>
<dbReference type="RefSeq" id="WP_001362115.1">
    <property type="nucleotide sequence ID" value="NC_008253.1"/>
</dbReference>
<dbReference type="KEGG" id="ecp:ECP_1541"/>
<dbReference type="HOGENOM" id="CLU_102486_2_0_6"/>
<dbReference type="Proteomes" id="UP000009182">
    <property type="component" value="Chromosome"/>
</dbReference>
<dbReference type="GO" id="GO:0042597">
    <property type="term" value="C:periplasmic space"/>
    <property type="evidence" value="ECO:0007669"/>
    <property type="project" value="UniProtKB-SubCell"/>
</dbReference>
<dbReference type="HAMAP" id="MF_00546">
    <property type="entry name" value="Asr"/>
    <property type="match status" value="1"/>
</dbReference>
<dbReference type="InterPro" id="IPR023497">
    <property type="entry name" value="Acid_shock"/>
</dbReference>
<dbReference type="NCBIfam" id="NF033636">
    <property type="entry name" value="acid_shock_Asr"/>
    <property type="match status" value="1"/>
</dbReference>
<dbReference type="Pfam" id="PF06392">
    <property type="entry name" value="Asr"/>
    <property type="match status" value="1"/>
</dbReference>
<name>ASR_ECOL5</name>
<proteinExistence type="inferred from homology"/>
<organism>
    <name type="scientific">Escherichia coli O6:K15:H31 (strain 536 / UPEC)</name>
    <dbReference type="NCBI Taxonomy" id="362663"/>
    <lineage>
        <taxon>Bacteria</taxon>
        <taxon>Pseudomonadati</taxon>
        <taxon>Pseudomonadota</taxon>
        <taxon>Gammaproteobacteria</taxon>
        <taxon>Enterobacterales</taxon>
        <taxon>Enterobacteriaceae</taxon>
        <taxon>Escherichia</taxon>
    </lineage>
</organism>
<sequence length="102" mass="10531">MKKVLALVVAAAMGLSSAAFAAETATTPAPTATTTKAAPAKTTHHKKQHKAAPAQKAQAAKKHHKNAKAEQKAPEQKAQAAKKHAKKHSHQQPAKPAAQPAA</sequence>
<reference key="1">
    <citation type="journal article" date="2006" name="Mol. Microbiol.">
        <title>Role of pathogenicity island-associated integrases in the genome plasticity of uropathogenic Escherichia coli strain 536.</title>
        <authorList>
            <person name="Hochhut B."/>
            <person name="Wilde C."/>
            <person name="Balling G."/>
            <person name="Middendorf B."/>
            <person name="Dobrindt U."/>
            <person name="Brzuszkiewicz E."/>
            <person name="Gottschalk G."/>
            <person name="Carniel E."/>
            <person name="Hacker J."/>
        </authorList>
    </citation>
    <scope>NUCLEOTIDE SEQUENCE [LARGE SCALE GENOMIC DNA]</scope>
    <source>
        <strain>536 / UPEC</strain>
    </source>
</reference>